<feature type="chain" id="PRO_1000133771" description="GTPase Era">
    <location>
        <begin position="1"/>
        <end position="296"/>
    </location>
</feature>
<feature type="domain" description="Era-type G" evidence="2">
    <location>
        <begin position="3"/>
        <end position="170"/>
    </location>
</feature>
<feature type="domain" description="KH type-2" evidence="1">
    <location>
        <begin position="201"/>
        <end position="278"/>
    </location>
</feature>
<feature type="region of interest" description="G1" evidence="2">
    <location>
        <begin position="11"/>
        <end position="18"/>
    </location>
</feature>
<feature type="region of interest" description="G2" evidence="2">
    <location>
        <begin position="37"/>
        <end position="41"/>
    </location>
</feature>
<feature type="region of interest" description="G3" evidence="2">
    <location>
        <begin position="58"/>
        <end position="61"/>
    </location>
</feature>
<feature type="region of interest" description="G4" evidence="2">
    <location>
        <begin position="120"/>
        <end position="123"/>
    </location>
</feature>
<feature type="region of interest" description="G5" evidence="2">
    <location>
        <begin position="149"/>
        <end position="151"/>
    </location>
</feature>
<feature type="binding site" evidence="1">
    <location>
        <begin position="11"/>
        <end position="18"/>
    </location>
    <ligand>
        <name>GTP</name>
        <dbReference type="ChEBI" id="CHEBI:37565"/>
    </ligand>
</feature>
<feature type="binding site" evidence="1">
    <location>
        <begin position="58"/>
        <end position="62"/>
    </location>
    <ligand>
        <name>GTP</name>
        <dbReference type="ChEBI" id="CHEBI:37565"/>
    </ligand>
</feature>
<feature type="binding site" evidence="1">
    <location>
        <begin position="120"/>
        <end position="123"/>
    </location>
    <ligand>
        <name>GTP</name>
        <dbReference type="ChEBI" id="CHEBI:37565"/>
    </ligand>
</feature>
<keyword id="KW-1003">Cell membrane</keyword>
<keyword id="KW-0963">Cytoplasm</keyword>
<keyword id="KW-0342">GTP-binding</keyword>
<keyword id="KW-0472">Membrane</keyword>
<keyword id="KW-0547">Nucleotide-binding</keyword>
<keyword id="KW-0690">Ribosome biogenesis</keyword>
<keyword id="KW-0694">RNA-binding</keyword>
<keyword id="KW-0699">rRNA-binding</keyword>
<name>ERA_CLOBJ</name>
<accession>C1FVS6</accession>
<comment type="function">
    <text evidence="1">An essential GTPase that binds both GDP and GTP, with rapid nucleotide exchange. Plays a role in 16S rRNA processing and 30S ribosomal subunit biogenesis and possibly also in cell cycle regulation and energy metabolism.</text>
</comment>
<comment type="subunit">
    <text evidence="1">Monomer.</text>
</comment>
<comment type="subcellular location">
    <subcellularLocation>
        <location>Cytoplasm</location>
    </subcellularLocation>
    <subcellularLocation>
        <location evidence="1">Cell membrane</location>
        <topology evidence="1">Peripheral membrane protein</topology>
    </subcellularLocation>
</comment>
<comment type="similarity">
    <text evidence="1 2">Belongs to the TRAFAC class TrmE-Era-EngA-EngB-Septin-like GTPase superfamily. Era GTPase family.</text>
</comment>
<evidence type="ECO:0000255" key="1">
    <source>
        <dbReference type="HAMAP-Rule" id="MF_00367"/>
    </source>
</evidence>
<evidence type="ECO:0000255" key="2">
    <source>
        <dbReference type="PROSITE-ProRule" id="PRU01050"/>
    </source>
</evidence>
<dbReference type="EMBL" id="CP001581">
    <property type="protein sequence ID" value="ACO85456.1"/>
    <property type="molecule type" value="Genomic_DNA"/>
</dbReference>
<dbReference type="RefSeq" id="WP_003483987.1">
    <property type="nucleotide sequence ID" value="NC_012563.1"/>
</dbReference>
<dbReference type="SMR" id="C1FVS6"/>
<dbReference type="KEGG" id="cby:CLM_3340"/>
<dbReference type="eggNOG" id="COG1159">
    <property type="taxonomic scope" value="Bacteria"/>
</dbReference>
<dbReference type="HOGENOM" id="CLU_038009_1_0_9"/>
<dbReference type="Proteomes" id="UP000001374">
    <property type="component" value="Chromosome"/>
</dbReference>
<dbReference type="GO" id="GO:0005829">
    <property type="term" value="C:cytosol"/>
    <property type="evidence" value="ECO:0007669"/>
    <property type="project" value="TreeGrafter"/>
</dbReference>
<dbReference type="GO" id="GO:0005886">
    <property type="term" value="C:plasma membrane"/>
    <property type="evidence" value="ECO:0007669"/>
    <property type="project" value="UniProtKB-SubCell"/>
</dbReference>
<dbReference type="GO" id="GO:0005525">
    <property type="term" value="F:GTP binding"/>
    <property type="evidence" value="ECO:0007669"/>
    <property type="project" value="UniProtKB-UniRule"/>
</dbReference>
<dbReference type="GO" id="GO:0003924">
    <property type="term" value="F:GTPase activity"/>
    <property type="evidence" value="ECO:0007669"/>
    <property type="project" value="UniProtKB-UniRule"/>
</dbReference>
<dbReference type="GO" id="GO:0043024">
    <property type="term" value="F:ribosomal small subunit binding"/>
    <property type="evidence" value="ECO:0007669"/>
    <property type="project" value="TreeGrafter"/>
</dbReference>
<dbReference type="GO" id="GO:0070181">
    <property type="term" value="F:small ribosomal subunit rRNA binding"/>
    <property type="evidence" value="ECO:0007669"/>
    <property type="project" value="UniProtKB-UniRule"/>
</dbReference>
<dbReference type="GO" id="GO:0000028">
    <property type="term" value="P:ribosomal small subunit assembly"/>
    <property type="evidence" value="ECO:0007669"/>
    <property type="project" value="TreeGrafter"/>
</dbReference>
<dbReference type="CDD" id="cd04163">
    <property type="entry name" value="Era"/>
    <property type="match status" value="1"/>
</dbReference>
<dbReference type="CDD" id="cd22534">
    <property type="entry name" value="KH-II_Era"/>
    <property type="match status" value="1"/>
</dbReference>
<dbReference type="FunFam" id="3.30.300.20:FF:000003">
    <property type="entry name" value="GTPase Era"/>
    <property type="match status" value="1"/>
</dbReference>
<dbReference type="FunFam" id="3.40.50.300:FF:000094">
    <property type="entry name" value="GTPase Era"/>
    <property type="match status" value="1"/>
</dbReference>
<dbReference type="Gene3D" id="3.30.300.20">
    <property type="match status" value="1"/>
</dbReference>
<dbReference type="Gene3D" id="3.40.50.300">
    <property type="entry name" value="P-loop containing nucleotide triphosphate hydrolases"/>
    <property type="match status" value="1"/>
</dbReference>
<dbReference type="HAMAP" id="MF_00367">
    <property type="entry name" value="GTPase_Era"/>
    <property type="match status" value="1"/>
</dbReference>
<dbReference type="InterPro" id="IPR030388">
    <property type="entry name" value="G_ERA_dom"/>
</dbReference>
<dbReference type="InterPro" id="IPR006073">
    <property type="entry name" value="GTP-bd"/>
</dbReference>
<dbReference type="InterPro" id="IPR005662">
    <property type="entry name" value="GTPase_Era-like"/>
</dbReference>
<dbReference type="InterPro" id="IPR015946">
    <property type="entry name" value="KH_dom-like_a/b"/>
</dbReference>
<dbReference type="InterPro" id="IPR004044">
    <property type="entry name" value="KH_dom_type_2"/>
</dbReference>
<dbReference type="InterPro" id="IPR009019">
    <property type="entry name" value="KH_sf_prok-type"/>
</dbReference>
<dbReference type="InterPro" id="IPR027417">
    <property type="entry name" value="P-loop_NTPase"/>
</dbReference>
<dbReference type="InterPro" id="IPR005225">
    <property type="entry name" value="Small_GTP-bd"/>
</dbReference>
<dbReference type="NCBIfam" id="TIGR00436">
    <property type="entry name" value="era"/>
    <property type="match status" value="1"/>
</dbReference>
<dbReference type="NCBIfam" id="NF000908">
    <property type="entry name" value="PRK00089.1"/>
    <property type="match status" value="1"/>
</dbReference>
<dbReference type="NCBIfam" id="TIGR00231">
    <property type="entry name" value="small_GTP"/>
    <property type="match status" value="1"/>
</dbReference>
<dbReference type="PANTHER" id="PTHR42698">
    <property type="entry name" value="GTPASE ERA"/>
    <property type="match status" value="1"/>
</dbReference>
<dbReference type="PANTHER" id="PTHR42698:SF1">
    <property type="entry name" value="GTPASE ERA, MITOCHONDRIAL"/>
    <property type="match status" value="1"/>
</dbReference>
<dbReference type="Pfam" id="PF07650">
    <property type="entry name" value="KH_2"/>
    <property type="match status" value="1"/>
</dbReference>
<dbReference type="Pfam" id="PF01926">
    <property type="entry name" value="MMR_HSR1"/>
    <property type="match status" value="1"/>
</dbReference>
<dbReference type="SUPFAM" id="SSF52540">
    <property type="entry name" value="P-loop containing nucleoside triphosphate hydrolases"/>
    <property type="match status" value="1"/>
</dbReference>
<dbReference type="SUPFAM" id="SSF54814">
    <property type="entry name" value="Prokaryotic type KH domain (KH-domain type II)"/>
    <property type="match status" value="1"/>
</dbReference>
<dbReference type="PROSITE" id="PS51713">
    <property type="entry name" value="G_ERA"/>
    <property type="match status" value="1"/>
</dbReference>
<dbReference type="PROSITE" id="PS50823">
    <property type="entry name" value="KH_TYPE_2"/>
    <property type="match status" value="1"/>
</dbReference>
<proteinExistence type="inferred from homology"/>
<protein>
    <recommendedName>
        <fullName evidence="1">GTPase Era</fullName>
    </recommendedName>
</protein>
<gene>
    <name evidence="1" type="primary">era</name>
    <name type="ordered locus">CLM_3340</name>
</gene>
<organism>
    <name type="scientific">Clostridium botulinum (strain Kyoto / Type A2)</name>
    <dbReference type="NCBI Taxonomy" id="536232"/>
    <lineage>
        <taxon>Bacteria</taxon>
        <taxon>Bacillati</taxon>
        <taxon>Bacillota</taxon>
        <taxon>Clostridia</taxon>
        <taxon>Eubacteriales</taxon>
        <taxon>Clostridiaceae</taxon>
        <taxon>Clostridium</taxon>
    </lineage>
</organism>
<reference key="1">
    <citation type="submission" date="2008-10" db="EMBL/GenBank/DDBJ databases">
        <title>Genome sequence of Clostridium botulinum A2 Kyoto.</title>
        <authorList>
            <person name="Shrivastava S."/>
            <person name="Brinkac L.M."/>
            <person name="Brown J.L."/>
            <person name="Bruce D."/>
            <person name="Detter C.C."/>
            <person name="Johnson E.A."/>
            <person name="Munk C.A."/>
            <person name="Smith L.A."/>
            <person name="Smith T.J."/>
            <person name="Sutton G."/>
            <person name="Brettin T.S."/>
        </authorList>
    </citation>
    <scope>NUCLEOTIDE SEQUENCE [LARGE SCALE GENOMIC DNA]</scope>
    <source>
        <strain>Kyoto / Type A2</strain>
    </source>
</reference>
<sequence length="296" mass="34075">MFKSGFVTIVGRPNVGKSTLLNAIMKEKLSIVSCRPQTTRNNIQTILTEDNYQLVFVDTPGIHKPKHKLGEYMVKSASDAMKDVDLVLFLINPDEKPGRGDLFIIEQLKEVKVPVFLVLNKIDENPQEKVAETLKTYSELMEFQEIIPISALKGKNVDLLKELMFKYIPEGPQYYPEDMIIDQNERFIVAEIVREKALRLLSEEVPHGIAVEILQMKKNEKGTYHIEGNILCEKNSHKPIIIGKGGSKLKKISQYARQDIEAFLQSKVYIRLWVKVKEEWRDNQSLLKELGYKKMK</sequence>